<name>ECPB_SHIBS</name>
<sequence length="222" mass="24517">MKKHLLPLALLFSGISPAQALDVGDISSFMNSDSSTLSKTIKNSTDSGRLINIRLERLSSPLDDGQVISMDKPDELLLTPASLLLPAQASEVIRFFYKGPADEKERYYRIVWFDQALSDAQRDNANRSAVATASARIGTILVVAPRQANYHFQYANGSLTNTGNATLRILAYGPCLKAANGKECKENYYLMPGKSRRFTRVDTADNKGRVALWQGDKFIPVK</sequence>
<protein>
    <recommendedName>
        <fullName>Probable fimbrial chaperone EcpB</fullName>
    </recommendedName>
</protein>
<proteinExistence type="inferred from homology"/>
<organism>
    <name type="scientific">Shigella boydii serotype 4 (strain Sb227)</name>
    <dbReference type="NCBI Taxonomy" id="300268"/>
    <lineage>
        <taxon>Bacteria</taxon>
        <taxon>Pseudomonadati</taxon>
        <taxon>Pseudomonadota</taxon>
        <taxon>Gammaproteobacteria</taxon>
        <taxon>Enterobacterales</taxon>
        <taxon>Enterobacteriaceae</taxon>
        <taxon>Shigella</taxon>
    </lineage>
</organism>
<comment type="function">
    <text evidence="1">Part of the ecpRABCDE operon, which encodes the E.coli common pilus (ECP). ECP plays a dual role in early-stage biofilm development and host cell recognition (By similarity).</text>
</comment>
<comment type="induction">
    <text evidence="1">Positively regulated by EcpR.</text>
</comment>
<comment type="similarity">
    <text evidence="3">Belongs to the EcpB/EcpE family.</text>
</comment>
<reference key="1">
    <citation type="journal article" date="2005" name="Nucleic Acids Res.">
        <title>Genome dynamics and diversity of Shigella species, the etiologic agents of bacillary dysentery.</title>
        <authorList>
            <person name="Yang F."/>
            <person name="Yang J."/>
            <person name="Zhang X."/>
            <person name="Chen L."/>
            <person name="Jiang Y."/>
            <person name="Yan Y."/>
            <person name="Tang X."/>
            <person name="Wang J."/>
            <person name="Xiong Z."/>
            <person name="Dong J."/>
            <person name="Xue Y."/>
            <person name="Zhu Y."/>
            <person name="Xu X."/>
            <person name="Sun L."/>
            <person name="Chen S."/>
            <person name="Nie H."/>
            <person name="Peng J."/>
            <person name="Xu J."/>
            <person name="Wang Y."/>
            <person name="Yuan Z."/>
            <person name="Wen Y."/>
            <person name="Yao Z."/>
            <person name="Shen Y."/>
            <person name="Qiang B."/>
            <person name="Hou Y."/>
            <person name="Yu J."/>
            <person name="Jin Q."/>
        </authorList>
    </citation>
    <scope>NUCLEOTIDE SEQUENCE [LARGE SCALE GENOMIC DNA]</scope>
    <source>
        <strain>Sb227</strain>
    </source>
</reference>
<accession>Q325R3</accession>
<evidence type="ECO:0000250" key="1"/>
<evidence type="ECO:0000255" key="2"/>
<evidence type="ECO:0000305" key="3"/>
<keyword id="KW-0143">Chaperone</keyword>
<keyword id="KW-1029">Fimbrium biogenesis</keyword>
<keyword id="KW-0732">Signal</keyword>
<feature type="signal peptide" evidence="2">
    <location>
        <begin position="1"/>
        <end position="20"/>
    </location>
</feature>
<feature type="chain" id="PRO_0000369170" description="Probable fimbrial chaperone EcpB">
    <location>
        <begin position="21"/>
        <end position="222"/>
    </location>
</feature>
<dbReference type="EMBL" id="CP000036">
    <property type="protein sequence ID" value="ABB64945.1"/>
    <property type="molecule type" value="Genomic_DNA"/>
</dbReference>
<dbReference type="RefSeq" id="WP_000716398.1">
    <property type="nucleotide sequence ID" value="NC_007613.1"/>
</dbReference>
<dbReference type="SMR" id="Q325R3"/>
<dbReference type="GeneID" id="75204621"/>
<dbReference type="KEGG" id="sbo:SBO_0227"/>
<dbReference type="HOGENOM" id="CLU_106652_0_0_6"/>
<dbReference type="Proteomes" id="UP000007067">
    <property type="component" value="Chromosome"/>
</dbReference>
<dbReference type="Gene3D" id="2.60.40.10">
    <property type="entry name" value="Immunoglobulins"/>
    <property type="match status" value="1"/>
</dbReference>
<dbReference type="InterPro" id="IPR040695">
    <property type="entry name" value="EcpB_C"/>
</dbReference>
<dbReference type="InterPro" id="IPR013783">
    <property type="entry name" value="Ig-like_fold"/>
</dbReference>
<dbReference type="InterPro" id="IPR008962">
    <property type="entry name" value="PapD-like_sf"/>
</dbReference>
<dbReference type="Pfam" id="PF18649">
    <property type="entry name" value="EcpB_C"/>
    <property type="match status" value="1"/>
</dbReference>
<dbReference type="SUPFAM" id="SSF49354">
    <property type="entry name" value="PapD-like"/>
    <property type="match status" value="1"/>
</dbReference>
<gene>
    <name type="primary">ecpB</name>
    <name type="synonym">matC</name>
    <name type="ordered locus">SBO_0227</name>
</gene>